<name>TPSDA_ABIGR</name>
<organism>
    <name type="scientific">Abies grandis</name>
    <name type="common">Grand fir</name>
    <name type="synonym">Pinus grandis</name>
    <dbReference type="NCBI Taxonomy" id="46611"/>
    <lineage>
        <taxon>Eukaryota</taxon>
        <taxon>Viridiplantae</taxon>
        <taxon>Streptophyta</taxon>
        <taxon>Embryophyta</taxon>
        <taxon>Tracheophyta</taxon>
        <taxon>Spermatophyta</taxon>
        <taxon>Pinopsida</taxon>
        <taxon>Pinidae</taxon>
        <taxon>Conifers I</taxon>
        <taxon>Pinales</taxon>
        <taxon>Pinaceae</taxon>
        <taxon>Abies</taxon>
    </lineage>
</organism>
<feature type="transit peptide" description="Chloroplast" evidence="2">
    <location>
        <begin position="1"/>
        <end position="56"/>
    </location>
</feature>
<feature type="chain" id="PRO_0000033632" description="Limonene synthase, chloroplastic">
    <location>
        <begin position="57"/>
        <end position="637"/>
    </location>
</feature>
<feature type="short sequence motif" description="DDXXD motif">
    <location>
        <begin position="388"/>
        <end position="392"/>
    </location>
</feature>
<feature type="binding site" evidence="1">
    <location>
        <position position="388"/>
    </location>
    <ligand>
        <name>Mg(2+)</name>
        <dbReference type="ChEBI" id="CHEBI:18420"/>
        <label>1</label>
    </ligand>
</feature>
<feature type="binding site" evidence="1">
    <location>
        <position position="388"/>
    </location>
    <ligand>
        <name>Mg(2+)</name>
        <dbReference type="ChEBI" id="CHEBI:18420"/>
        <label>2</label>
    </ligand>
</feature>
<feature type="binding site" evidence="1">
    <location>
        <position position="392"/>
    </location>
    <ligand>
        <name>Mg(2+)</name>
        <dbReference type="ChEBI" id="CHEBI:18420"/>
        <label>1</label>
    </ligand>
</feature>
<feature type="binding site" evidence="1">
    <location>
        <position position="392"/>
    </location>
    <ligand>
        <name>Mg(2+)</name>
        <dbReference type="ChEBI" id="CHEBI:18420"/>
        <label>2</label>
    </ligand>
</feature>
<feature type="binding site" evidence="1">
    <location>
        <position position="540"/>
    </location>
    <ligand>
        <name>Mg(2+)</name>
        <dbReference type="ChEBI" id="CHEBI:18420"/>
        <label>3</label>
    </ligand>
</feature>
<feature type="sequence conflict" description="In Ref. 2; AAK83565." evidence="5" ref="2">
    <original>L</original>
    <variation>Q</variation>
    <location>
        <position position="17"/>
    </location>
</feature>
<feature type="sequence conflict" description="In Ref. 2; AAK83565." evidence="5" ref="2">
    <original>G</original>
    <variation>D</variation>
    <location>
        <position position="64"/>
    </location>
</feature>
<feature type="sequence conflict" description="In Ref. 2; AAK83565." evidence="5" ref="2">
    <original>V</original>
    <variation>L</variation>
    <location>
        <position position="104"/>
    </location>
</feature>
<feature type="sequence conflict" description="In Ref. 2; AAK83565." evidence="5" ref="2">
    <original>E</original>
    <variation>Q</variation>
    <location>
        <position position="207"/>
    </location>
</feature>
<feature type="sequence conflict" description="In Ref. 2; AAK83565." evidence="5" ref="2">
    <original>K</original>
    <variation>E</variation>
    <location>
        <position position="256"/>
    </location>
</feature>
<feature type="sequence conflict" description="In Ref. 2; AAK83565." evidence="5" ref="2">
    <original>L</original>
    <variation>E</variation>
    <location>
        <position position="367"/>
    </location>
</feature>
<feature type="sequence conflict" description="In Ref. 2; AAK83565." evidence="5" ref="2">
    <original>E</original>
    <variation>Q</variation>
    <location>
        <position position="441"/>
    </location>
</feature>
<feature type="sequence conflict" description="In Ref. 2; AAK83565." evidence="5" ref="2">
    <original>A</original>
    <variation>G</variation>
    <location>
        <position position="455"/>
    </location>
</feature>
<feature type="sequence conflict" description="In Ref. 2; AAK83565." evidence="5" ref="2">
    <original>M</original>
    <variation>I</variation>
    <location>
        <position position="464"/>
    </location>
</feature>
<feature type="sequence conflict" description="In Ref. 2; AAK83565." evidence="5" ref="2">
    <original>I</original>
    <variation>T</variation>
    <location>
        <position position="561"/>
    </location>
</feature>
<accession>O22340</accession>
<accession>Q94FV9</accession>
<proteinExistence type="evidence at protein level"/>
<protein>
    <recommendedName>
        <fullName>Limonene synthase, chloroplastic</fullName>
        <ecNumber>4.2.3.16</ecNumber>
    </recommendedName>
    <alternativeName>
        <fullName>(-)-(4S)-limonene synthase</fullName>
    </alternativeName>
    <alternativeName>
        <fullName>Agg-lim1</fullName>
    </alternativeName>
</protein>
<dbReference type="EC" id="4.2.3.16"/>
<dbReference type="EMBL" id="AF006193">
    <property type="protein sequence ID" value="AAB70907.1"/>
    <property type="molecule type" value="mRNA"/>
</dbReference>
<dbReference type="EMBL" id="AF326518">
    <property type="protein sequence ID" value="AAK83565.1"/>
    <property type="molecule type" value="Genomic_DNA"/>
</dbReference>
<dbReference type="SMR" id="O22340"/>
<dbReference type="KEGG" id="ag:AAB70907"/>
<dbReference type="BioCyc" id="MetaCyc:MONOMER-12820"/>
<dbReference type="BRENDA" id="4.2.3.16">
    <property type="organism ID" value="2"/>
</dbReference>
<dbReference type="UniPathway" id="UPA00924"/>
<dbReference type="GO" id="GO:0009507">
    <property type="term" value="C:chloroplast"/>
    <property type="evidence" value="ECO:0007669"/>
    <property type="project" value="UniProtKB-SubCell"/>
</dbReference>
<dbReference type="GO" id="GO:0050552">
    <property type="term" value="F:(4S)-limonene synthase activity"/>
    <property type="evidence" value="ECO:0007669"/>
    <property type="project" value="UniProtKB-EC"/>
</dbReference>
<dbReference type="GO" id="GO:0000287">
    <property type="term" value="F:magnesium ion binding"/>
    <property type="evidence" value="ECO:0007669"/>
    <property type="project" value="InterPro"/>
</dbReference>
<dbReference type="GO" id="GO:0016102">
    <property type="term" value="P:diterpenoid biosynthetic process"/>
    <property type="evidence" value="ECO:0007669"/>
    <property type="project" value="InterPro"/>
</dbReference>
<dbReference type="CDD" id="cd00684">
    <property type="entry name" value="Terpene_cyclase_plant_C1"/>
    <property type="match status" value="1"/>
</dbReference>
<dbReference type="FunFam" id="1.50.10.130:FF:000002">
    <property type="entry name" value="Ent-copalyl diphosphate synthase, chloroplastic"/>
    <property type="match status" value="1"/>
</dbReference>
<dbReference type="FunFam" id="1.10.600.10:FF:000005">
    <property type="entry name" value="Ent-kaur-16-ene synthase, chloroplastic"/>
    <property type="match status" value="1"/>
</dbReference>
<dbReference type="Gene3D" id="1.10.600.10">
    <property type="entry name" value="Farnesyl Diphosphate Synthase"/>
    <property type="match status" value="1"/>
</dbReference>
<dbReference type="Gene3D" id="1.50.10.130">
    <property type="entry name" value="Terpene synthase, N-terminal domain"/>
    <property type="match status" value="1"/>
</dbReference>
<dbReference type="InterPro" id="IPR008949">
    <property type="entry name" value="Isoprenoid_synthase_dom_sf"/>
</dbReference>
<dbReference type="InterPro" id="IPR034741">
    <property type="entry name" value="Terpene_cyclase-like_1_C"/>
</dbReference>
<dbReference type="InterPro" id="IPR044814">
    <property type="entry name" value="Terpene_cyclase_plant_C1"/>
</dbReference>
<dbReference type="InterPro" id="IPR001906">
    <property type="entry name" value="Terpene_synth_N"/>
</dbReference>
<dbReference type="InterPro" id="IPR036965">
    <property type="entry name" value="Terpene_synth_N_sf"/>
</dbReference>
<dbReference type="InterPro" id="IPR050148">
    <property type="entry name" value="Terpene_synthase-like"/>
</dbReference>
<dbReference type="InterPro" id="IPR005630">
    <property type="entry name" value="Terpene_synthase_metal-bd"/>
</dbReference>
<dbReference type="InterPro" id="IPR008930">
    <property type="entry name" value="Terpenoid_cyclase/PrenylTrfase"/>
</dbReference>
<dbReference type="PANTHER" id="PTHR31739:SF25">
    <property type="entry name" value="(E,E)-GERANYLLINALOOL SYNTHASE"/>
    <property type="match status" value="1"/>
</dbReference>
<dbReference type="PANTHER" id="PTHR31739">
    <property type="entry name" value="ENT-COPALYL DIPHOSPHATE SYNTHASE, CHLOROPLASTIC"/>
    <property type="match status" value="1"/>
</dbReference>
<dbReference type="Pfam" id="PF01397">
    <property type="entry name" value="Terpene_synth"/>
    <property type="match status" value="1"/>
</dbReference>
<dbReference type="Pfam" id="PF03936">
    <property type="entry name" value="Terpene_synth_C"/>
    <property type="match status" value="1"/>
</dbReference>
<dbReference type="SFLD" id="SFLDS00005">
    <property type="entry name" value="Isoprenoid_Synthase_Type_I"/>
    <property type="match status" value="1"/>
</dbReference>
<dbReference type="SFLD" id="SFLDG01019">
    <property type="entry name" value="Terpene_Cyclase_Like_1_C_Termi"/>
    <property type="match status" value="1"/>
</dbReference>
<dbReference type="SFLD" id="SFLDG01014">
    <property type="entry name" value="Terpene_Cyclase_Like_1_N-term"/>
    <property type="match status" value="1"/>
</dbReference>
<dbReference type="SUPFAM" id="SSF48239">
    <property type="entry name" value="Terpenoid cyclases/Protein prenyltransferases"/>
    <property type="match status" value="1"/>
</dbReference>
<dbReference type="SUPFAM" id="SSF48576">
    <property type="entry name" value="Terpenoid synthases"/>
    <property type="match status" value="1"/>
</dbReference>
<evidence type="ECO:0000250" key="1"/>
<evidence type="ECO:0000255" key="2"/>
<evidence type="ECO:0000269" key="3">
    <source>
    </source>
</evidence>
<evidence type="ECO:0000269" key="4">
    <source>
    </source>
</evidence>
<evidence type="ECO:0000305" key="5"/>
<sequence>MALLSIVSLQVPKSCGLKSLISSSNVQKALCISTAVPTLRMRRRQKALVINMKLTTVSHRDDNGGGVLQRRIADHHPNLWEDDFIQSLSSPYGGSSYSERAETVVEEVKEMFNSIPNNRELFGSQNDLLTRLWMVDSIERLGIDRHFQNEIRVALDYVYSYWKEKEGIGCGRDSTFPDLNSTALALRTLRLHGYNVSSDVLEYFKDEKGHFACPAILTEGQITRSVLNLYRASLVAFPGEKVMEEAEIFSASYLKKVLQKIPVSNLSGEIEYVLEYGWHTNLPRLEARNYIEVYEQSGYESLNEMPYMNMKKLLQLAKLEFNIFHSLQLRELQSISRWWKESGSSQLTFTRHRHVEYYTMASCISMLPKHSAFRMEFVKVCHLVTVLDDIYDTFGTMNELQLFTDAIKRWDLSTTRWLPEYMKGVYMDLYQCINEMVEEAEKTQGRDMLNYIQNAWEALFDTFMQEAKWISSSYLPTFEEYLKNAKVSSGSRIATLQPILTLDVPLPDYILQEIDYPSRFNELASSILRLRGDTRCYKADRARGEEASAISCYMKDHPGSIEEDALNHINAMISDAIRELNWELLRPDSKSPISSKKHAFDITRAFHHVYKYRDGYTVSNNETKNLVMKTVLEPLAL</sequence>
<comment type="function">
    <text evidence="4">Involved in defensive oleoresin formation in conifers in response to insect attack or other injury. Involved in monoterpene (C10) olefins biosynthesis.</text>
</comment>
<comment type="catalytic activity">
    <reaction>
        <text>(2E)-geranyl diphosphate = (4S)-limonene + diphosphate</text>
        <dbReference type="Rhea" id="RHEA:12869"/>
        <dbReference type="ChEBI" id="CHEBI:15383"/>
        <dbReference type="ChEBI" id="CHEBI:33019"/>
        <dbReference type="ChEBI" id="CHEBI:58057"/>
        <dbReference type="EC" id="4.2.3.16"/>
    </reaction>
</comment>
<comment type="cofactor">
    <cofactor evidence="1">
        <name>Mg(2+)</name>
        <dbReference type="ChEBI" id="CHEBI:18420"/>
    </cofactor>
    <cofactor evidence="1">
        <name>Mn(2+)</name>
        <dbReference type="ChEBI" id="CHEBI:29035"/>
    </cofactor>
    <text evidence="1">Binds 3 Mg(2+) or Mn(2+) ions per subunit.</text>
</comment>
<comment type="cofactor">
    <cofactor>
        <name>K(+)</name>
        <dbReference type="ChEBI" id="CHEBI:29103"/>
    </cofactor>
</comment>
<comment type="pathway">
    <text>Terpene metabolism; oleoresin biosynthesis.</text>
</comment>
<comment type="subcellular location">
    <subcellularLocation>
        <location>Plastid</location>
        <location>Chloroplast</location>
    </subcellularLocation>
</comment>
<comment type="induction">
    <text evidence="3">By wounding.</text>
</comment>
<comment type="domain">
    <text>The Asp-Asp-Xaa-Xaa-Asp/Glu (DDXXD/E) motif is important for the catalytic activity, presumably through binding to Mg(2+).</text>
</comment>
<comment type="miscellaneous">
    <text>The conserved 70-Arg-Arg-71 motif may play a role in the isomerization step of the terpenoid cyclization reaction sequence.</text>
</comment>
<comment type="similarity">
    <text evidence="5">Belongs to the terpene synthase family. Tpsd subfamily.</text>
</comment>
<gene>
    <name type="primary">ag10</name>
</gene>
<reference key="1">
    <citation type="journal article" date="1997" name="J. Biol. Chem.">
        <title>Monoterpene synthases from grand fir (Abies grandis). cDNA isolation, characterization, and functional expression of myrcene synthase, (-)-(4S)-limonene synthase, and (-)-(1S,5S)-pinene synthase.</title>
        <authorList>
            <person name="Bohlmann J."/>
            <person name="Steele C.L."/>
            <person name="Croteau R.B."/>
        </authorList>
    </citation>
    <scope>NUCLEOTIDE SEQUENCE [MRNA]</scope>
    <scope>INDUCTION</scope>
    <scope>CHARACTERIZATION</scope>
</reference>
<reference key="2">
    <citation type="journal article" date="2001" name="Genetics">
        <title>Genomic organization of plant terpene synthases and molecular evolutionary implications.</title>
        <authorList>
            <person name="Trapp S.C."/>
            <person name="Croteau R.B."/>
        </authorList>
    </citation>
    <scope>NUCLEOTIDE SEQUENCE [GENOMIC DNA]</scope>
    <scope>NOMENCLATURE</scope>
</reference>
<reference key="3">
    <citation type="journal article" date="1998" name="Proc. Natl. Acad. Sci. U.S.A.">
        <title>Plant terpenoid synthases: molecular biology and phylogenetic analysis.</title>
        <authorList>
            <person name="Bohlmann J."/>
            <person name="Meyer-Gauen G."/>
            <person name="Croteau R.B."/>
        </authorList>
    </citation>
    <scope>GENE FAMILY</scope>
    <scope>NOMENCLATURE</scope>
    <scope>FUNCTION</scope>
</reference>
<keyword id="KW-0150">Chloroplast</keyword>
<keyword id="KW-0456">Lyase</keyword>
<keyword id="KW-0460">Magnesium</keyword>
<keyword id="KW-0464">Manganese</keyword>
<keyword id="KW-0479">Metal-binding</keyword>
<keyword id="KW-0934">Plastid</keyword>
<keyword id="KW-0809">Transit peptide</keyword>